<comment type="function">
    <text evidence="8 9 10 11 12 13 14 15 16">Non-receptor tyrosine-protein kinase that transmits signals from cell surface receptors devoid of kinase activity and contributes to the regulation of immune responses, including neutrophil, monocyte, macrophage and mast cell functions, cytoskeleton remodeling in response to extracellular stimuli, phagocytosis, cell adhesion and migration. Promotes mast cell degranulation, release of inflammatory cytokines and IgE-mediated anaphylaxis. Acts downstream of receptors that bind the Fc region of immunoglobulins, such as MS4A2/FCER1B, FCER1G and FCGR2. Acts downstream of ITGB1 and ITGB2, and regulates actin cytoskeleton reorganization, cell spreading and adhesion. Depending on the context, activates or inhibits cellular responses. Functions as a negative regulator of ITGB2 signaling, phagocytosis and SYK activity in monocytes (PubMed:11672534). Required for normal ITGB1 and ITGB2 signaling, normal cell spreading and adhesion in neutrophils and macrophages (PubMed:8666673, PubMed:9687507). Functions as a positive regulator of cell migration and regulates cytoskeleton reorganization via RAC1 activation (PubMed:15561106). Phosphorylates SYK (in vitro) and promotes SYK-dependent activation of AKT1 and MAP kinase signaling (PubMed:21746961). Phosphorylates PLD2 in antigen-stimulated mast cells, leading to PLD2 activation and the production of the signaling molecules lysophosphatidic acid and diacylglycerol. Promotes activation of PIK3R1. Phosphorylates FASLG, and thereby regulates its ubiquitination and subsequent internalization. Phosphorylates ABL1. Promotes phosphorylation of CBL, CTTN, PIK3R1, PTK2/FAK1, PTK2B/PYK2 and VAV2. Phosphorylates HCLS1 that has already been phosphorylated by SYK, but not unphosphorylated HCLS1. Together with CLNK, it acts as a negative regulator of natural killer cell-activating receptors and inhibits interferon-gamma production (PubMed:16439675).</text>
</comment>
<comment type="catalytic activity">
    <reaction evidence="7 10">
        <text>L-tyrosyl-[protein] + ATP = O-phospho-L-tyrosyl-[protein] + ADP + H(+)</text>
        <dbReference type="Rhea" id="RHEA:10596"/>
        <dbReference type="Rhea" id="RHEA-COMP:10136"/>
        <dbReference type="Rhea" id="RHEA-COMP:20101"/>
        <dbReference type="ChEBI" id="CHEBI:15378"/>
        <dbReference type="ChEBI" id="CHEBI:30616"/>
        <dbReference type="ChEBI" id="CHEBI:46858"/>
        <dbReference type="ChEBI" id="CHEBI:61978"/>
        <dbReference type="ChEBI" id="CHEBI:456216"/>
        <dbReference type="EC" id="2.7.10.2"/>
    </reaction>
</comment>
<comment type="activity regulation">
    <text>Activated by autophosphorylation. Prior phosphorylation at Tyr-511 by SRC inhibits ulterior autophosphorylation at Tyr-400. Activated by phorbol myristate acetate, phosphatidic acid and poly-Lys. Binding (via SH2 domain) of HCLS1 that is already phosphorylated by SYK strongly increases kinase activity.</text>
</comment>
<comment type="subunit">
    <text evidence="1 11">Interacts with ITGB1, ITGB2, MS4A2/FCER1B, FCER1G and FCGR2. Interacts (via SH2 domain) with SYK (tyrosine phosphorylated). Interacts (via SH2 domain) with FLT3 (tyrosine phosphorylated). Interacts with PTK2/FAK1. Interacts (via SH2 domain) with HCLS1 (tyrosine phosphorylated by SYK). Interacts with SIRPA and PTPNS1. Interacts (not phosphorylated on tyrosine residues) with CBL; FGR tyrosine phosphorylation promotes dissociation (By similarity). Interacts with CLNK (PubMed:16439675).</text>
</comment>
<comment type="interaction">
    <interactant intactId="EBI-7587024">
        <id>P14234</id>
    </interactant>
    <interactant intactId="EBI-8040679">
        <id>Q9QZE2</id>
        <label>Clnk</label>
    </interactant>
    <organismsDiffer>false</organismsDiffer>
    <experiments>3</experiments>
</comment>
<comment type="subcellular location">
    <subcellularLocation>
        <location evidence="18">Cell membrane</location>
        <topology evidence="18">Lipid-anchor</topology>
        <orientation evidence="18">Cytoplasmic side</orientation>
    </subcellularLocation>
    <subcellularLocation>
        <location evidence="10">Cell membrane</location>
        <topology evidence="10">Peripheral membrane protein</topology>
        <orientation evidence="10">Cytoplasmic side</orientation>
    </subcellularLocation>
    <subcellularLocation>
        <location evidence="10">Cell projection</location>
        <location evidence="10">Ruffle membrane</location>
    </subcellularLocation>
    <subcellularLocation>
        <location evidence="10">Cytoplasm</location>
        <location evidence="10">Cytosol</location>
    </subcellularLocation>
    <subcellularLocation>
        <location evidence="10">Cytoplasm</location>
        <location evidence="10">Cytoskeleton</location>
    </subcellularLocation>
    <subcellularLocation>
        <location evidence="1">Mitochondrion inner membrane</location>
    </subcellularLocation>
    <subcellularLocation>
        <location evidence="1">Mitochondrion intermembrane space</location>
    </subcellularLocation>
    <text evidence="1">Detected in mitochondrial intermembrane space and at inner membranes (By similarity). Colocalizes with actin fibers at membrane ruffles. Detected at plasma membrane lipid rafts.</text>
</comment>
<comment type="tissue specificity">
    <text evidence="11">Expressed in natural killer cells (at protein level).</text>
</comment>
<comment type="PTM">
    <text evidence="1">Ubiquitinated. Becomes ubiquitinated in response to ITGB2 signaling; this does not lead to degradation (By similarity).</text>
</comment>
<comment type="PTM">
    <text evidence="1">Phosphorylated. Autophosphorylated on tyrosine residues. Becomes phosphorylated in response to FCGR2 engagement, cell adhesion and signaling by ITGB2. Prior phosphorylation at Tyr-511 by SRC inhibits ulterior autophosphorylation at Tyr-400 (By similarity).</text>
</comment>
<comment type="disruption phenotype">
    <text evidence="14 15">No visible phenotype. Mice lacking both Fgr and Hck are normal and fertile, but show increased susceptibility to infection with Listeria monocytogenes. In addition, their polymorphonuclear leukocytes show defects in cell spreading and adhesion.</text>
</comment>
<comment type="similarity">
    <text evidence="4">Belongs to the protein kinase superfamily. Tyr protein kinase family. SRC subfamily.</text>
</comment>
<organism>
    <name type="scientific">Mus musculus</name>
    <name type="common">Mouse</name>
    <dbReference type="NCBI Taxonomy" id="10090"/>
    <lineage>
        <taxon>Eukaryota</taxon>
        <taxon>Metazoa</taxon>
        <taxon>Chordata</taxon>
        <taxon>Craniata</taxon>
        <taxon>Vertebrata</taxon>
        <taxon>Euteleostomi</taxon>
        <taxon>Mammalia</taxon>
        <taxon>Eutheria</taxon>
        <taxon>Euarchontoglires</taxon>
        <taxon>Glires</taxon>
        <taxon>Rodentia</taxon>
        <taxon>Myomorpha</taxon>
        <taxon>Muroidea</taxon>
        <taxon>Muridae</taxon>
        <taxon>Murinae</taxon>
        <taxon>Mus</taxon>
        <taxon>Mus</taxon>
    </lineage>
</organism>
<evidence type="ECO:0000250" key="1"/>
<evidence type="ECO:0000250" key="2">
    <source>
        <dbReference type="UniProtKB" id="P09769"/>
    </source>
</evidence>
<evidence type="ECO:0000250" key="3">
    <source>
        <dbReference type="UniProtKB" id="Q6P6U0"/>
    </source>
</evidence>
<evidence type="ECO:0000255" key="4">
    <source>
        <dbReference type="PROSITE-ProRule" id="PRU00159"/>
    </source>
</evidence>
<evidence type="ECO:0000255" key="5">
    <source>
        <dbReference type="PROSITE-ProRule" id="PRU00191"/>
    </source>
</evidence>
<evidence type="ECO:0000255" key="6">
    <source>
        <dbReference type="PROSITE-ProRule" id="PRU00192"/>
    </source>
</evidence>
<evidence type="ECO:0000255" key="7">
    <source>
        <dbReference type="PROSITE-ProRule" id="PRU10028"/>
    </source>
</evidence>
<evidence type="ECO:0000269" key="8">
    <source>
    </source>
</evidence>
<evidence type="ECO:0000269" key="9">
    <source>
    </source>
</evidence>
<evidence type="ECO:0000269" key="10">
    <source>
    </source>
</evidence>
<evidence type="ECO:0000269" key="11">
    <source>
    </source>
</evidence>
<evidence type="ECO:0000269" key="12">
    <source>
    </source>
</evidence>
<evidence type="ECO:0000269" key="13">
    <source>
    </source>
</evidence>
<evidence type="ECO:0000269" key="14">
    <source>
    </source>
</evidence>
<evidence type="ECO:0000269" key="15">
    <source>
    </source>
</evidence>
<evidence type="ECO:0000269" key="16">
    <source>
    </source>
</evidence>
<evidence type="ECO:0000305" key="17"/>
<evidence type="ECO:0000305" key="18">
    <source>
    </source>
</evidence>
<evidence type="ECO:0007744" key="19">
    <source>
    </source>
</evidence>
<evidence type="ECO:0007744" key="20">
    <source>
    </source>
</evidence>
<gene>
    <name type="primary">Fgr</name>
</gene>
<keyword id="KW-0067">ATP-binding</keyword>
<keyword id="KW-1003">Cell membrane</keyword>
<keyword id="KW-0966">Cell projection</keyword>
<keyword id="KW-0963">Cytoplasm</keyword>
<keyword id="KW-0206">Cytoskeleton</keyword>
<keyword id="KW-0391">Immunity</keyword>
<keyword id="KW-0399">Innate immunity</keyword>
<keyword id="KW-0418">Kinase</keyword>
<keyword id="KW-0449">Lipoprotein</keyword>
<keyword id="KW-0472">Membrane</keyword>
<keyword id="KW-0496">Mitochondrion</keyword>
<keyword id="KW-0999">Mitochondrion inner membrane</keyword>
<keyword id="KW-0519">Myristate</keyword>
<keyword id="KW-0547">Nucleotide-binding</keyword>
<keyword id="KW-0564">Palmitate</keyword>
<keyword id="KW-0597">Phosphoprotein</keyword>
<keyword id="KW-0656">Proto-oncogene</keyword>
<keyword id="KW-1185">Reference proteome</keyword>
<keyword id="KW-0727">SH2 domain</keyword>
<keyword id="KW-0728">SH3 domain</keyword>
<keyword id="KW-0808">Transferase</keyword>
<keyword id="KW-0829">Tyrosine-protein kinase</keyword>
<keyword id="KW-0832">Ubl conjugation</keyword>
<feature type="initiator methionine" description="Removed" evidence="17">
    <location>
        <position position="1"/>
    </location>
</feature>
<feature type="chain" id="PRO_0000088092" description="Tyrosine-protein kinase Fgr">
    <location>
        <begin position="2"/>
        <end position="517"/>
    </location>
</feature>
<feature type="domain" description="SH3" evidence="6">
    <location>
        <begin position="65"/>
        <end position="126"/>
    </location>
</feature>
<feature type="domain" description="SH2" evidence="5">
    <location>
        <begin position="132"/>
        <end position="229"/>
    </location>
</feature>
<feature type="domain" description="Protein kinase" evidence="4">
    <location>
        <begin position="251"/>
        <end position="504"/>
    </location>
</feature>
<feature type="region of interest" description="Interaction with CLNK" evidence="11">
    <location>
        <begin position="102"/>
        <end position="103"/>
    </location>
</feature>
<feature type="active site" description="Proton acceptor" evidence="4 7">
    <location>
        <position position="370"/>
    </location>
</feature>
<feature type="binding site" evidence="4">
    <location>
        <begin position="257"/>
        <end position="265"/>
    </location>
    <ligand>
        <name>ATP</name>
        <dbReference type="ChEBI" id="CHEBI:30616"/>
    </ligand>
</feature>
<feature type="binding site" evidence="4">
    <location>
        <position position="279"/>
    </location>
    <ligand>
        <name>ATP</name>
        <dbReference type="ChEBI" id="CHEBI:30616"/>
    </ligand>
</feature>
<feature type="modified residue" description="Phosphoserine" evidence="19">
    <location>
        <position position="13"/>
    </location>
</feature>
<feature type="modified residue" description="Phosphotyrosine" evidence="2">
    <location>
        <position position="32"/>
    </location>
</feature>
<feature type="modified residue" description="Phosphoserine" evidence="3">
    <location>
        <position position="50"/>
    </location>
</feature>
<feature type="modified residue" description="Phosphotyrosine" evidence="20">
    <location>
        <position position="196"/>
    </location>
</feature>
<feature type="modified residue" description="Phosphoserine" evidence="20">
    <location>
        <position position="206"/>
    </location>
</feature>
<feature type="modified residue" description="Phosphotyrosine" evidence="19">
    <location>
        <position position="400"/>
    </location>
</feature>
<feature type="modified residue" description="Phosphotyrosine; by SRC" evidence="2">
    <location>
        <position position="511"/>
    </location>
</feature>
<feature type="lipid moiety-binding region" description="N-myristoyl glycine" evidence="18">
    <location>
        <position position="2"/>
    </location>
</feature>
<feature type="lipid moiety-binding region" description="S-palmitoyl cysteine" evidence="18">
    <location>
        <position position="3"/>
    </location>
</feature>
<feature type="lipid moiety-binding region" description="S-palmitoyl cysteine" evidence="18">
    <location>
        <position position="6"/>
    </location>
</feature>
<feature type="mutagenesis site" description="Abolishes localization at the cell membrane." evidence="10">
    <location>
        <begin position="1"/>
        <end position="7"/>
    </location>
</feature>
<feature type="mutagenesis site" description="Loss of CLNK binding." evidence="11">
    <original>WW</original>
    <variation>AA</variation>
    <location>
        <begin position="102"/>
        <end position="103"/>
    </location>
</feature>
<feature type="mutagenesis site" description="Loss of kinase activity." evidence="8">
    <original>K</original>
    <variation>R</variation>
    <location>
        <position position="279"/>
    </location>
</feature>
<feature type="sequence conflict" description="In Ref. 1; CAA34463 and 2; CAA36437." evidence="17" ref="1 2">
    <original>F</original>
    <variation>Y</variation>
    <location>
        <position position="33"/>
    </location>
</feature>
<feature type="sequence conflict" description="In Ref. 1; CAA34463." evidence="17" ref="1">
    <original>T</original>
    <variation>N</variation>
    <location>
        <position position="41"/>
    </location>
</feature>
<feature type="sequence conflict" description="In Ref. 1; CAA34463." evidence="17" ref="1">
    <original>R</original>
    <variation>Q</variation>
    <location>
        <position position="212"/>
    </location>
</feature>
<reference key="1">
    <citation type="journal article" date="1989" name="Oncogene">
        <title>Cloning of the murine c-fgr proto-oncogene cDNA and induction of c-fgr expression by proliferation and activation factors in normal bone marrow-derived monocytic cells.</title>
        <authorList>
            <person name="Yi T.L."/>
            <person name="Willman C.L."/>
        </authorList>
    </citation>
    <scope>NUCLEOTIDE SEQUENCE [MRNA]</scope>
    <source>
        <strain>DBA/2J</strain>
    </source>
</reference>
<reference key="2">
    <citation type="journal article" date="1990" name="Oncogene">
        <title>Molecular cloning and sequencing of the murine c-fgr gene.</title>
        <authorList>
            <person name="King F.J."/>
            <person name="Cole M.D."/>
        </authorList>
    </citation>
    <scope>NUCLEOTIDE SEQUENCE [MRNA]</scope>
    <source>
        <strain>BALB/cJ</strain>
        <tissue>Monocytic leukemia</tissue>
    </source>
</reference>
<reference key="3">
    <citation type="journal article" date="2005" name="Science">
        <title>The transcriptional landscape of the mammalian genome.</title>
        <authorList>
            <person name="Carninci P."/>
            <person name="Kasukawa T."/>
            <person name="Katayama S."/>
            <person name="Gough J."/>
            <person name="Frith M.C."/>
            <person name="Maeda N."/>
            <person name="Oyama R."/>
            <person name="Ravasi T."/>
            <person name="Lenhard B."/>
            <person name="Wells C."/>
            <person name="Kodzius R."/>
            <person name="Shimokawa K."/>
            <person name="Bajic V.B."/>
            <person name="Brenner S.E."/>
            <person name="Batalov S."/>
            <person name="Forrest A.R."/>
            <person name="Zavolan M."/>
            <person name="Davis M.J."/>
            <person name="Wilming L.G."/>
            <person name="Aidinis V."/>
            <person name="Allen J.E."/>
            <person name="Ambesi-Impiombato A."/>
            <person name="Apweiler R."/>
            <person name="Aturaliya R.N."/>
            <person name="Bailey T.L."/>
            <person name="Bansal M."/>
            <person name="Baxter L."/>
            <person name="Beisel K.W."/>
            <person name="Bersano T."/>
            <person name="Bono H."/>
            <person name="Chalk A.M."/>
            <person name="Chiu K.P."/>
            <person name="Choudhary V."/>
            <person name="Christoffels A."/>
            <person name="Clutterbuck D.R."/>
            <person name="Crowe M.L."/>
            <person name="Dalla E."/>
            <person name="Dalrymple B.P."/>
            <person name="de Bono B."/>
            <person name="Della Gatta G."/>
            <person name="di Bernardo D."/>
            <person name="Down T."/>
            <person name="Engstrom P."/>
            <person name="Fagiolini M."/>
            <person name="Faulkner G."/>
            <person name="Fletcher C.F."/>
            <person name="Fukushima T."/>
            <person name="Furuno M."/>
            <person name="Futaki S."/>
            <person name="Gariboldi M."/>
            <person name="Georgii-Hemming P."/>
            <person name="Gingeras T.R."/>
            <person name="Gojobori T."/>
            <person name="Green R.E."/>
            <person name="Gustincich S."/>
            <person name="Harbers M."/>
            <person name="Hayashi Y."/>
            <person name="Hensch T.K."/>
            <person name="Hirokawa N."/>
            <person name="Hill D."/>
            <person name="Huminiecki L."/>
            <person name="Iacono M."/>
            <person name="Ikeo K."/>
            <person name="Iwama A."/>
            <person name="Ishikawa T."/>
            <person name="Jakt M."/>
            <person name="Kanapin A."/>
            <person name="Katoh M."/>
            <person name="Kawasawa Y."/>
            <person name="Kelso J."/>
            <person name="Kitamura H."/>
            <person name="Kitano H."/>
            <person name="Kollias G."/>
            <person name="Krishnan S.P."/>
            <person name="Kruger A."/>
            <person name="Kummerfeld S.K."/>
            <person name="Kurochkin I.V."/>
            <person name="Lareau L.F."/>
            <person name="Lazarevic D."/>
            <person name="Lipovich L."/>
            <person name="Liu J."/>
            <person name="Liuni S."/>
            <person name="McWilliam S."/>
            <person name="Madan Babu M."/>
            <person name="Madera M."/>
            <person name="Marchionni L."/>
            <person name="Matsuda H."/>
            <person name="Matsuzawa S."/>
            <person name="Miki H."/>
            <person name="Mignone F."/>
            <person name="Miyake S."/>
            <person name="Morris K."/>
            <person name="Mottagui-Tabar S."/>
            <person name="Mulder N."/>
            <person name="Nakano N."/>
            <person name="Nakauchi H."/>
            <person name="Ng P."/>
            <person name="Nilsson R."/>
            <person name="Nishiguchi S."/>
            <person name="Nishikawa S."/>
            <person name="Nori F."/>
            <person name="Ohara O."/>
            <person name="Okazaki Y."/>
            <person name="Orlando V."/>
            <person name="Pang K.C."/>
            <person name="Pavan W.J."/>
            <person name="Pavesi G."/>
            <person name="Pesole G."/>
            <person name="Petrovsky N."/>
            <person name="Piazza S."/>
            <person name="Reed J."/>
            <person name="Reid J.F."/>
            <person name="Ring B.Z."/>
            <person name="Ringwald M."/>
            <person name="Rost B."/>
            <person name="Ruan Y."/>
            <person name="Salzberg S.L."/>
            <person name="Sandelin A."/>
            <person name="Schneider C."/>
            <person name="Schoenbach C."/>
            <person name="Sekiguchi K."/>
            <person name="Semple C.A."/>
            <person name="Seno S."/>
            <person name="Sessa L."/>
            <person name="Sheng Y."/>
            <person name="Shibata Y."/>
            <person name="Shimada H."/>
            <person name="Shimada K."/>
            <person name="Silva D."/>
            <person name="Sinclair B."/>
            <person name="Sperling S."/>
            <person name="Stupka E."/>
            <person name="Sugiura K."/>
            <person name="Sultana R."/>
            <person name="Takenaka Y."/>
            <person name="Taki K."/>
            <person name="Tammoja K."/>
            <person name="Tan S.L."/>
            <person name="Tang S."/>
            <person name="Taylor M.S."/>
            <person name="Tegner J."/>
            <person name="Teichmann S.A."/>
            <person name="Ueda H.R."/>
            <person name="van Nimwegen E."/>
            <person name="Verardo R."/>
            <person name="Wei C.L."/>
            <person name="Yagi K."/>
            <person name="Yamanishi H."/>
            <person name="Zabarovsky E."/>
            <person name="Zhu S."/>
            <person name="Zimmer A."/>
            <person name="Hide W."/>
            <person name="Bult C."/>
            <person name="Grimmond S.M."/>
            <person name="Teasdale R.D."/>
            <person name="Liu E.T."/>
            <person name="Brusic V."/>
            <person name="Quackenbush J."/>
            <person name="Wahlestedt C."/>
            <person name="Mattick J.S."/>
            <person name="Hume D.A."/>
            <person name="Kai C."/>
            <person name="Sasaki D."/>
            <person name="Tomaru Y."/>
            <person name="Fukuda S."/>
            <person name="Kanamori-Katayama M."/>
            <person name="Suzuki M."/>
            <person name="Aoki J."/>
            <person name="Arakawa T."/>
            <person name="Iida J."/>
            <person name="Imamura K."/>
            <person name="Itoh M."/>
            <person name="Kato T."/>
            <person name="Kawaji H."/>
            <person name="Kawagashira N."/>
            <person name="Kawashima T."/>
            <person name="Kojima M."/>
            <person name="Kondo S."/>
            <person name="Konno H."/>
            <person name="Nakano K."/>
            <person name="Ninomiya N."/>
            <person name="Nishio T."/>
            <person name="Okada M."/>
            <person name="Plessy C."/>
            <person name="Shibata K."/>
            <person name="Shiraki T."/>
            <person name="Suzuki S."/>
            <person name="Tagami M."/>
            <person name="Waki K."/>
            <person name="Watahiki A."/>
            <person name="Okamura-Oho Y."/>
            <person name="Suzuki H."/>
            <person name="Kawai J."/>
            <person name="Hayashizaki Y."/>
        </authorList>
    </citation>
    <scope>NUCLEOTIDE SEQUENCE [LARGE SCALE MRNA]</scope>
    <source>
        <strain>C57BL/6J</strain>
        <tissue>Bone</tissue>
        <tissue>Thymus</tissue>
    </source>
</reference>
<reference key="4">
    <citation type="journal article" date="2009" name="PLoS Biol.">
        <title>Lineage-specific biology revealed by a finished genome assembly of the mouse.</title>
        <authorList>
            <person name="Church D.M."/>
            <person name="Goodstadt L."/>
            <person name="Hillier L.W."/>
            <person name="Zody M.C."/>
            <person name="Goldstein S."/>
            <person name="She X."/>
            <person name="Bult C.J."/>
            <person name="Agarwala R."/>
            <person name="Cherry J.L."/>
            <person name="DiCuccio M."/>
            <person name="Hlavina W."/>
            <person name="Kapustin Y."/>
            <person name="Meric P."/>
            <person name="Maglott D."/>
            <person name="Birtle Z."/>
            <person name="Marques A.C."/>
            <person name="Graves T."/>
            <person name="Zhou S."/>
            <person name="Teague B."/>
            <person name="Potamousis K."/>
            <person name="Churas C."/>
            <person name="Place M."/>
            <person name="Herschleb J."/>
            <person name="Runnheim R."/>
            <person name="Forrest D."/>
            <person name="Amos-Landgraf J."/>
            <person name="Schwartz D.C."/>
            <person name="Cheng Z."/>
            <person name="Lindblad-Toh K."/>
            <person name="Eichler E.E."/>
            <person name="Ponting C.P."/>
        </authorList>
    </citation>
    <scope>NUCLEOTIDE SEQUENCE [LARGE SCALE GENOMIC DNA]</scope>
    <source>
        <strain>C57BL/6J</strain>
    </source>
</reference>
<reference key="5">
    <citation type="submission" date="2005-07" db="EMBL/GenBank/DDBJ databases">
        <authorList>
            <person name="Mural R.J."/>
            <person name="Adams M.D."/>
            <person name="Myers E.W."/>
            <person name="Smith H.O."/>
            <person name="Venter J.C."/>
        </authorList>
    </citation>
    <scope>NUCLEOTIDE SEQUENCE [LARGE SCALE GENOMIC DNA]</scope>
</reference>
<reference key="6">
    <citation type="journal article" date="1994" name="Genes Dev.">
        <title>Functional overlap in the src gene family: inactivation of hck and fgr impairs natural immunity.</title>
        <authorList>
            <person name="Lowell C.A."/>
            <person name="Soriano P."/>
            <person name="Varmus H.E."/>
        </authorList>
    </citation>
    <scope>DISRUPTION PHENOTYPE</scope>
    <scope>FUNCTION IN IMMUNITY TO LISTERIA INFECTION</scope>
</reference>
<reference key="7">
    <citation type="journal article" date="1996" name="J. Cell Biol.">
        <title>Deficiency of Src family kinases p59/61hck and p58c-fgr results in defective adhesion-dependent neutrophil functions.</title>
        <authorList>
            <person name="Lowell C.A."/>
            <person name="Fumagalli L."/>
            <person name="Berton G."/>
        </authorList>
    </citation>
    <scope>DISRUPTION PHENOTYPE</scope>
    <scope>FUNCTION IN CELL ADHESION AND INTEGRIN SIGNALING</scope>
</reference>
<reference key="8">
    <citation type="journal article" date="1998" name="EMBO J.">
        <title>A beta 1 integrin signaling pathway involving Src-family kinases, Cbl and PI-3 kinase is required for macrophage spreading and migration.</title>
        <authorList>
            <person name="Meng F."/>
            <person name="Lowell C.A."/>
        </authorList>
    </citation>
    <scope>FUNCTION IN ITGB1 SIGNALING</scope>
    <scope>FUNCTION IN PHOSPHORYLATION OF CBL</scope>
    <scope>INTERACTION WITH CBL</scope>
</reference>
<reference key="9">
    <citation type="journal article" date="2000" name="J. Exp. Med.">
        <title>Negative regulation of phagocytosis in murine macrophages by the Src kinase family member, Fgr.</title>
        <authorList>
            <person name="Gresham H.D."/>
            <person name="Dale B.M."/>
            <person name="Potter J.W."/>
            <person name="Chang P.W."/>
            <person name="Vines C.M."/>
            <person name="Lowell C.A."/>
            <person name="Lagenaur C.F."/>
            <person name="Willman C.L."/>
        </authorList>
    </citation>
    <scope>INTERACTION WITH SIRPA AND PTPNS1</scope>
    <scope>MUTAGENESIS OF LYS-279</scope>
    <scope>FUNCTION AS NEGATIVE REGULATOR OF PHAGOCYTOSIS</scope>
</reference>
<reference key="10">
    <citation type="journal article" date="2001" name="Immunity">
        <title>Inhibition of beta 2 integrin receptor and Syk kinase signaling in monocytes by the Src family kinase Fgr.</title>
        <authorList>
            <person name="Vines C.M."/>
            <person name="Potter J.W."/>
            <person name="Xu Y."/>
            <person name="Geahlen R.L."/>
            <person name="Costello P.S."/>
            <person name="Tybulewicz V.L."/>
            <person name="Lowell C.A."/>
            <person name="Chang P.W."/>
            <person name="Gresham H.D."/>
            <person name="Willman C.L."/>
        </authorList>
    </citation>
    <scope>FUNCTION AS NEGATIVE REGULATOR OF SYK AND INTEGRIN SIGNALING</scope>
    <scope>INTERACTION WITH SYK</scope>
</reference>
<reference key="11">
    <citation type="journal article" date="2005" name="Exp. Cell Res.">
        <title>The proto-oncogene Fgr regulates cell migration and this requires its plasma membrane localization.</title>
        <authorList>
            <person name="Continolo S."/>
            <person name="Baruzzi A."/>
            <person name="Majeed M."/>
            <person name="Caveggion E."/>
            <person name="Fumagalli L."/>
            <person name="Lowell C.A."/>
            <person name="Berton G."/>
        </authorList>
    </citation>
    <scope>FUNCTION IN REGULATION OF CELL MIGRATION; ACTIVATION OF RAC1 AND IN PHOSPHORYLATION OF PIK3R1; PTK2/FAK1; VAV2; PTK2B/PYK2 AND CTTN</scope>
    <scope>CATALYTIC ACTIVITY</scope>
    <scope>INTERACTION WITH PTK2/FAK1</scope>
    <scope>MYRISTOYLATION AT GLY-2</scope>
    <scope>PALMITOYLATION AT CYS-3 AND CYS-6</scope>
    <scope>MUTAGENESIS OF 1-MET--LYS-7</scope>
    <scope>SUBCELLULAR LOCATION</scope>
</reference>
<reference key="12">
    <citation type="journal article" date="2006" name="Blood">
        <title>Dual function for the adaptor MIST in IFN-gamma production by NK and CD4+NKT cells regulated by the Src kinase Fgr.</title>
        <authorList>
            <person name="Sasanuma H."/>
            <person name="Tatsuno A."/>
            <person name="Hidano S."/>
            <person name="Ohshima K."/>
            <person name="Matsuzaki Y."/>
            <person name="Hayashi K."/>
            <person name="Lowell C.A."/>
            <person name="Kitamura D."/>
            <person name="Goitsuka R."/>
        </authorList>
    </citation>
    <scope>FUNCTION</scope>
    <scope>INTERACTION WITH CLNK</scope>
    <scope>TISSUE SPECIFICITY</scope>
    <scope>MUTAGENESIS OF 102-TRP-TRP-103</scope>
</reference>
<reference key="13">
    <citation type="journal article" date="2006" name="Blood">
        <title>Identification of Y589 and Y599 in the juxtamembrane domain of Flt3 as ligand-induced autophosphorylation sites involved in binding of Src family kinases and the protein tyrosine phosphatase SHP2.</title>
        <authorList>
            <person name="Heiss E."/>
            <person name="Masson K."/>
            <person name="Sundberg C."/>
            <person name="Pedersen M."/>
            <person name="Sun J."/>
            <person name="Bengtsson S."/>
            <person name="Ronnstrand L."/>
        </authorList>
    </citation>
    <scope>INTERACTION WITH FLT3</scope>
</reference>
<reference key="14">
    <citation type="journal article" date="2009" name="Immunity">
        <title>The phagosomal proteome in interferon-gamma-activated macrophages.</title>
        <authorList>
            <person name="Trost M."/>
            <person name="English L."/>
            <person name="Lemieux S."/>
            <person name="Courcelles M."/>
            <person name="Desjardins M."/>
            <person name="Thibault P."/>
        </authorList>
    </citation>
    <scope>PHOSPHORYLATION [LARGE SCALE ANALYSIS] AT SER-13 AND TYR-400</scope>
    <scope>IDENTIFICATION BY MASS SPECTROMETRY [LARGE SCALE ANALYSIS]</scope>
</reference>
<reference key="15">
    <citation type="journal article" date="2010" name="Cell">
        <title>A tissue-specific atlas of mouse protein phosphorylation and expression.</title>
        <authorList>
            <person name="Huttlin E.L."/>
            <person name="Jedrychowski M.P."/>
            <person name="Elias J.E."/>
            <person name="Goswami T."/>
            <person name="Rad R."/>
            <person name="Beausoleil S.A."/>
            <person name="Villen J."/>
            <person name="Haas W."/>
            <person name="Sowa M.E."/>
            <person name="Gygi S.P."/>
        </authorList>
    </citation>
    <scope>PHOSPHORYLATION [LARGE SCALE ANALYSIS] AT TYR-196 AND SER-206</scope>
    <scope>IDENTIFICATION BY MASS SPECTROMETRY [LARGE SCALE ANALYSIS]</scope>
    <source>
        <tissue>Spleen</tissue>
    </source>
</reference>
<reference key="16">
    <citation type="journal article" date="2010" name="FEBS Lett.">
        <title>c-Abl and Src-family kinases cross-talk in regulation of myeloid cell migration.</title>
        <authorList>
            <person name="Baruzzi A."/>
            <person name="Iacobucci I."/>
            <person name="Soverini S."/>
            <person name="Lowell C.A."/>
            <person name="Martinelli G."/>
            <person name="Berton G."/>
        </authorList>
    </citation>
    <scope>FUNCTION IN REGULATION OF CELL MIGRATION</scope>
    <scope>INTERACTION WITH ABL1; ITGB1 AND ITGB2</scope>
</reference>
<reference key="17">
    <citation type="journal article" date="2011" name="J. Immunol.">
        <title>The Src family kinase Fgr is critical for activation of mast cells and IgE-mediated anaphylaxis in mice.</title>
        <authorList>
            <person name="Lee J.H."/>
            <person name="Kim J.W."/>
            <person name="Kim do K."/>
            <person name="Kim H.S."/>
            <person name="Park H.J."/>
            <person name="Park D.K."/>
            <person name="Kim A.R."/>
            <person name="Kim B."/>
            <person name="Beaven M.A."/>
            <person name="Park K.L."/>
            <person name="Kim Y.M."/>
            <person name="Choi W.S."/>
        </authorList>
    </citation>
    <scope>FUNCTION IN PHOSPHORYLATION OF SYK; MAST CELL DEGRANULATION AND RELEASE OF CYTOKINES</scope>
    <scope>INTERACTION WITH FCER1G</scope>
</reference>
<proteinExistence type="evidence at protein level"/>
<sequence length="517" mass="58867">MGCVFCKKLEPASKEDVGLEGDFRSQTAEERYFPDPTQGRTSSVFPQPTSPAFLNTGNMRSISGTGVTIFVALYDYEARTGDDLTFTKGEKFHILNNTEYDWWEARSLSSGHRGYVPSNYVAPVDSIQAEEWYFGKISRKDAERQLLSSGNPQGAFLIRESETTKGAYSLSIRDWDQNRGDHIKHYKIRKLDTGGYYITTRAQFDSIQDLVRHYMEVNDGLCYLLTAPCTTTKPQTLGLAKDAWEIDRNSIALERRLGTGCFGDVWLGTWNCSTKVAVKTLKPGTMSPKAFLEEAQIMKLLRHDKLVQLYAVVSEEPIYIVTEFMCYGSLLDFLKDREGQNLMLPHLVDMAAQVAEGMAYMERMNYIHRDLRAANILVGEYLICKIADFGLARLIEDNEYNPQQGTKFPIKWTAPEAALFGRFTVKSDVWSFGILLTELITKGRVPYPGMNNREVLEQVEHGYHMPCPPGCPASLYEVMEQAWRLDPEERPTFEYLQSFLEDYFTSTEPQYQPGDQT</sequence>
<dbReference type="EC" id="2.7.10.2"/>
<dbReference type="EMBL" id="X16440">
    <property type="protein sequence ID" value="CAA34463.1"/>
    <property type="molecule type" value="mRNA"/>
</dbReference>
<dbReference type="EMBL" id="X52191">
    <property type="protein sequence ID" value="CAA36437.1"/>
    <property type="molecule type" value="mRNA"/>
</dbReference>
<dbReference type="EMBL" id="AK036438">
    <property type="protein sequence ID" value="BAC29429.1"/>
    <property type="molecule type" value="mRNA"/>
</dbReference>
<dbReference type="EMBL" id="AK036476">
    <property type="protein sequence ID" value="BAC29445.1"/>
    <property type="molecule type" value="mRNA"/>
</dbReference>
<dbReference type="EMBL" id="AK038141">
    <property type="protein sequence ID" value="BAC29939.1"/>
    <property type="molecule type" value="mRNA"/>
</dbReference>
<dbReference type="EMBL" id="AK155902">
    <property type="protein sequence ID" value="BAE33493.1"/>
    <property type="molecule type" value="mRNA"/>
</dbReference>
<dbReference type="EMBL" id="AL627184">
    <property type="status" value="NOT_ANNOTATED_CDS"/>
    <property type="molecule type" value="Genomic_DNA"/>
</dbReference>
<dbReference type="EMBL" id="CH466552">
    <property type="protein sequence ID" value="EDL30081.1"/>
    <property type="molecule type" value="Genomic_DNA"/>
</dbReference>
<dbReference type="EMBL" id="CH466552">
    <property type="protein sequence ID" value="EDL30082.1"/>
    <property type="molecule type" value="Genomic_DNA"/>
</dbReference>
<dbReference type="CCDS" id="CCDS18739.1"/>
<dbReference type="PIR" id="A43807">
    <property type="entry name" value="A43807"/>
</dbReference>
<dbReference type="RefSeq" id="NP_034338.3">
    <property type="nucleotide sequence ID" value="NM_010208.4"/>
</dbReference>
<dbReference type="RefSeq" id="XP_006538607.1">
    <property type="nucleotide sequence ID" value="XM_006538544.5"/>
</dbReference>
<dbReference type="RefSeq" id="XP_006538608.1">
    <property type="nucleotide sequence ID" value="XM_006538545.5"/>
</dbReference>
<dbReference type="SMR" id="P14234"/>
<dbReference type="BioGRID" id="199663">
    <property type="interactions" value="2"/>
</dbReference>
<dbReference type="CORUM" id="P14234"/>
<dbReference type="FunCoup" id="P14234">
    <property type="interactions" value="113"/>
</dbReference>
<dbReference type="IntAct" id="P14234">
    <property type="interactions" value="3"/>
</dbReference>
<dbReference type="MINT" id="P14234"/>
<dbReference type="STRING" id="10090.ENSMUSP00000030693"/>
<dbReference type="BindingDB" id="P14234"/>
<dbReference type="ChEMBL" id="CHEMBL2034795"/>
<dbReference type="iPTMnet" id="P14234"/>
<dbReference type="PhosphoSitePlus" id="P14234"/>
<dbReference type="SwissPalm" id="P14234"/>
<dbReference type="jPOST" id="P14234"/>
<dbReference type="PaxDb" id="10090-ENSMUSP00000030693"/>
<dbReference type="PeptideAtlas" id="P14234"/>
<dbReference type="ProteomicsDB" id="271590"/>
<dbReference type="Antibodypedia" id="711">
    <property type="antibodies" value="566 antibodies from 38 providers"/>
</dbReference>
<dbReference type="DNASU" id="14191"/>
<dbReference type="Ensembl" id="ENSMUST00000030693.13">
    <property type="protein sequence ID" value="ENSMUSP00000030693.7"/>
    <property type="gene ID" value="ENSMUSG00000028874.15"/>
</dbReference>
<dbReference type="Ensembl" id="ENSMUST00000171223.2">
    <property type="protein sequence ID" value="ENSMUSP00000128411.2"/>
    <property type="gene ID" value="ENSMUSG00000028874.15"/>
</dbReference>
<dbReference type="GeneID" id="14191"/>
<dbReference type="KEGG" id="mmu:14191"/>
<dbReference type="UCSC" id="uc012dmj.1">
    <property type="organism name" value="mouse"/>
</dbReference>
<dbReference type="AGR" id="MGI:95527"/>
<dbReference type="CTD" id="2268"/>
<dbReference type="MGI" id="MGI:95527">
    <property type="gene designation" value="Fgr"/>
</dbReference>
<dbReference type="VEuPathDB" id="HostDB:ENSMUSG00000028874"/>
<dbReference type="eggNOG" id="KOG0197">
    <property type="taxonomic scope" value="Eukaryota"/>
</dbReference>
<dbReference type="GeneTree" id="ENSGT00940000157554"/>
<dbReference type="HOGENOM" id="CLU_000288_7_2_1"/>
<dbReference type="InParanoid" id="P14234"/>
<dbReference type="OMA" id="AQIPNYN"/>
<dbReference type="OrthoDB" id="4062651at2759"/>
<dbReference type="PhylomeDB" id="P14234"/>
<dbReference type="TreeFam" id="TF351634"/>
<dbReference type="BRENDA" id="2.7.10.2">
    <property type="organism ID" value="3474"/>
</dbReference>
<dbReference type="Reactome" id="R-MMU-2029481">
    <property type="pathway name" value="FCGR activation"/>
</dbReference>
<dbReference type="Reactome" id="R-MMU-432142">
    <property type="pathway name" value="Platelet sensitization by LDL"/>
</dbReference>
<dbReference type="Reactome" id="R-MMU-6798695">
    <property type="pathway name" value="Neutrophil degranulation"/>
</dbReference>
<dbReference type="BioGRID-ORCS" id="14191">
    <property type="hits" value="3 hits in 80 CRISPR screens"/>
</dbReference>
<dbReference type="ChiTaRS" id="Fgr">
    <property type="organism name" value="mouse"/>
</dbReference>
<dbReference type="PRO" id="PR:P14234"/>
<dbReference type="Proteomes" id="UP000000589">
    <property type="component" value="Chromosome 4"/>
</dbReference>
<dbReference type="RNAct" id="P14234">
    <property type="molecule type" value="protein"/>
</dbReference>
<dbReference type="Bgee" id="ENSMUSG00000028874">
    <property type="expression patterns" value="Expressed in granulocyte and 70 other cell types or tissues"/>
</dbReference>
<dbReference type="GO" id="GO:0016235">
    <property type="term" value="C:aggresome"/>
    <property type="evidence" value="ECO:0007669"/>
    <property type="project" value="Ensembl"/>
</dbReference>
<dbReference type="GO" id="GO:0005856">
    <property type="term" value="C:cytoskeleton"/>
    <property type="evidence" value="ECO:0007669"/>
    <property type="project" value="UniProtKB-SubCell"/>
</dbReference>
<dbReference type="GO" id="GO:0005829">
    <property type="term" value="C:cytosol"/>
    <property type="evidence" value="ECO:0007669"/>
    <property type="project" value="UniProtKB-SubCell"/>
</dbReference>
<dbReference type="GO" id="GO:0005743">
    <property type="term" value="C:mitochondrial inner membrane"/>
    <property type="evidence" value="ECO:0007669"/>
    <property type="project" value="UniProtKB-SubCell"/>
</dbReference>
<dbReference type="GO" id="GO:0005758">
    <property type="term" value="C:mitochondrial intermembrane space"/>
    <property type="evidence" value="ECO:0007669"/>
    <property type="project" value="UniProtKB-SubCell"/>
</dbReference>
<dbReference type="GO" id="GO:0005886">
    <property type="term" value="C:plasma membrane"/>
    <property type="evidence" value="ECO:0000314"/>
    <property type="project" value="UniProtKB"/>
</dbReference>
<dbReference type="GO" id="GO:0032587">
    <property type="term" value="C:ruffle membrane"/>
    <property type="evidence" value="ECO:0007669"/>
    <property type="project" value="UniProtKB-SubCell"/>
</dbReference>
<dbReference type="GO" id="GO:0005524">
    <property type="term" value="F:ATP binding"/>
    <property type="evidence" value="ECO:0007669"/>
    <property type="project" value="UniProtKB-KW"/>
</dbReference>
<dbReference type="GO" id="GO:0034988">
    <property type="term" value="F:Fc-gamma receptor I complex binding"/>
    <property type="evidence" value="ECO:0007669"/>
    <property type="project" value="Ensembl"/>
</dbReference>
<dbReference type="GO" id="GO:0034987">
    <property type="term" value="F:immunoglobulin receptor binding"/>
    <property type="evidence" value="ECO:0000314"/>
    <property type="project" value="UniProtKB"/>
</dbReference>
<dbReference type="GO" id="GO:0004715">
    <property type="term" value="F:non-membrane spanning protein tyrosine kinase activity"/>
    <property type="evidence" value="ECO:0000314"/>
    <property type="project" value="UniProtKB"/>
</dbReference>
<dbReference type="GO" id="GO:0001784">
    <property type="term" value="F:phosphotyrosine residue binding"/>
    <property type="evidence" value="ECO:0000314"/>
    <property type="project" value="UniProtKB"/>
</dbReference>
<dbReference type="GO" id="GO:0019901">
    <property type="term" value="F:protein kinase binding"/>
    <property type="evidence" value="ECO:0000314"/>
    <property type="project" value="UniProtKB"/>
</dbReference>
<dbReference type="GO" id="GO:0030282">
    <property type="term" value="P:bone mineralization"/>
    <property type="evidence" value="ECO:0000315"/>
    <property type="project" value="MGI"/>
</dbReference>
<dbReference type="GO" id="GO:0050830">
    <property type="term" value="P:defense response to Gram-positive bacterium"/>
    <property type="evidence" value="ECO:0000315"/>
    <property type="project" value="UniProtKB"/>
</dbReference>
<dbReference type="GO" id="GO:0045087">
    <property type="term" value="P:innate immune response"/>
    <property type="evidence" value="ECO:0007669"/>
    <property type="project" value="UniProtKB-KW"/>
</dbReference>
<dbReference type="GO" id="GO:0007229">
    <property type="term" value="P:integrin-mediated signaling pathway"/>
    <property type="evidence" value="ECO:0000315"/>
    <property type="project" value="UniProtKB"/>
</dbReference>
<dbReference type="GO" id="GO:0032815">
    <property type="term" value="P:negative regulation of natural killer cell activation"/>
    <property type="evidence" value="ECO:0000315"/>
    <property type="project" value="UniProtKB"/>
</dbReference>
<dbReference type="GO" id="GO:0018108">
    <property type="term" value="P:peptidyl-tyrosine phosphorylation"/>
    <property type="evidence" value="ECO:0000314"/>
    <property type="project" value="UniProtKB"/>
</dbReference>
<dbReference type="GO" id="GO:0030335">
    <property type="term" value="P:positive regulation of cell migration"/>
    <property type="evidence" value="ECO:0000315"/>
    <property type="project" value="UniProtKB"/>
</dbReference>
<dbReference type="GO" id="GO:0001819">
    <property type="term" value="P:positive regulation of cytokine production"/>
    <property type="evidence" value="ECO:0000314"/>
    <property type="project" value="UniProtKB"/>
</dbReference>
<dbReference type="GO" id="GO:0043306">
    <property type="term" value="P:positive regulation of mast cell degranulation"/>
    <property type="evidence" value="ECO:0000314"/>
    <property type="project" value="UniProtKB"/>
</dbReference>
<dbReference type="GO" id="GO:0051897">
    <property type="term" value="P:positive regulation of phosphatidylinositol 3-kinase/protein kinase B signal transduction"/>
    <property type="evidence" value="ECO:0007669"/>
    <property type="project" value="Ensembl"/>
</dbReference>
<dbReference type="GO" id="GO:0032956">
    <property type="term" value="P:regulation of actin cytoskeleton organization"/>
    <property type="evidence" value="ECO:0000304"/>
    <property type="project" value="UniProtKB"/>
</dbReference>
<dbReference type="GO" id="GO:0008360">
    <property type="term" value="P:regulation of cell shape"/>
    <property type="evidence" value="ECO:0000315"/>
    <property type="project" value="UniProtKB"/>
</dbReference>
<dbReference type="GO" id="GO:0045088">
    <property type="term" value="P:regulation of innate immune response"/>
    <property type="evidence" value="ECO:0000315"/>
    <property type="project" value="UniProtKB"/>
</dbReference>
<dbReference type="GO" id="GO:0050764">
    <property type="term" value="P:regulation of phagocytosis"/>
    <property type="evidence" value="ECO:0000315"/>
    <property type="project" value="UniProtKB"/>
</dbReference>
<dbReference type="GO" id="GO:0045859">
    <property type="term" value="P:regulation of protein kinase activity"/>
    <property type="evidence" value="ECO:0000314"/>
    <property type="project" value="UniProtKB"/>
</dbReference>
<dbReference type="GO" id="GO:0048705">
    <property type="term" value="P:skeletal system morphogenesis"/>
    <property type="evidence" value="ECO:0000315"/>
    <property type="project" value="MGI"/>
</dbReference>
<dbReference type="CDD" id="cd10367">
    <property type="entry name" value="SH2_Src_Fgr"/>
    <property type="match status" value="1"/>
</dbReference>
<dbReference type="FunFam" id="1.10.510.10:FF:000553">
    <property type="entry name" value="Tyrosine-protein kinase"/>
    <property type="match status" value="1"/>
</dbReference>
<dbReference type="FunFam" id="3.30.200.20:FF:000016">
    <property type="entry name" value="Tyrosine-protein kinase"/>
    <property type="match status" value="1"/>
</dbReference>
<dbReference type="FunFam" id="3.30.505.10:FF:000001">
    <property type="entry name" value="Tyrosine-protein kinase"/>
    <property type="match status" value="1"/>
</dbReference>
<dbReference type="FunFam" id="2.30.30.40:FF:000182">
    <property type="entry name" value="Tyrosine-protein kinase Fyn"/>
    <property type="match status" value="1"/>
</dbReference>
<dbReference type="Gene3D" id="3.30.200.20">
    <property type="entry name" value="Phosphorylase Kinase, domain 1"/>
    <property type="match status" value="1"/>
</dbReference>
<dbReference type="Gene3D" id="3.30.505.10">
    <property type="entry name" value="SH2 domain"/>
    <property type="match status" value="1"/>
</dbReference>
<dbReference type="Gene3D" id="2.30.30.40">
    <property type="entry name" value="SH3 Domains"/>
    <property type="match status" value="1"/>
</dbReference>
<dbReference type="Gene3D" id="1.10.510.10">
    <property type="entry name" value="Transferase(Phosphotransferase) domain 1"/>
    <property type="match status" value="1"/>
</dbReference>
<dbReference type="InterPro" id="IPR035693">
    <property type="entry name" value="Fgr_SH2"/>
</dbReference>
<dbReference type="InterPro" id="IPR011009">
    <property type="entry name" value="Kinase-like_dom_sf"/>
</dbReference>
<dbReference type="InterPro" id="IPR050198">
    <property type="entry name" value="Non-receptor_tyrosine_kinases"/>
</dbReference>
<dbReference type="InterPro" id="IPR000719">
    <property type="entry name" value="Prot_kinase_dom"/>
</dbReference>
<dbReference type="InterPro" id="IPR017441">
    <property type="entry name" value="Protein_kinase_ATP_BS"/>
</dbReference>
<dbReference type="InterPro" id="IPR001245">
    <property type="entry name" value="Ser-Thr/Tyr_kinase_cat_dom"/>
</dbReference>
<dbReference type="InterPro" id="IPR000980">
    <property type="entry name" value="SH2"/>
</dbReference>
<dbReference type="InterPro" id="IPR036860">
    <property type="entry name" value="SH2_dom_sf"/>
</dbReference>
<dbReference type="InterPro" id="IPR036028">
    <property type="entry name" value="SH3-like_dom_sf"/>
</dbReference>
<dbReference type="InterPro" id="IPR001452">
    <property type="entry name" value="SH3_domain"/>
</dbReference>
<dbReference type="InterPro" id="IPR008266">
    <property type="entry name" value="Tyr_kinase_AS"/>
</dbReference>
<dbReference type="InterPro" id="IPR020635">
    <property type="entry name" value="Tyr_kinase_cat_dom"/>
</dbReference>
<dbReference type="PANTHER" id="PTHR24418">
    <property type="entry name" value="TYROSINE-PROTEIN KINASE"/>
    <property type="match status" value="1"/>
</dbReference>
<dbReference type="Pfam" id="PF07714">
    <property type="entry name" value="PK_Tyr_Ser-Thr"/>
    <property type="match status" value="1"/>
</dbReference>
<dbReference type="Pfam" id="PF00017">
    <property type="entry name" value="SH2"/>
    <property type="match status" value="1"/>
</dbReference>
<dbReference type="Pfam" id="PF00018">
    <property type="entry name" value="SH3_1"/>
    <property type="match status" value="1"/>
</dbReference>
<dbReference type="PRINTS" id="PR00401">
    <property type="entry name" value="SH2DOMAIN"/>
</dbReference>
<dbReference type="PRINTS" id="PR00452">
    <property type="entry name" value="SH3DOMAIN"/>
</dbReference>
<dbReference type="PRINTS" id="PR00109">
    <property type="entry name" value="TYRKINASE"/>
</dbReference>
<dbReference type="SMART" id="SM00252">
    <property type="entry name" value="SH2"/>
    <property type="match status" value="1"/>
</dbReference>
<dbReference type="SMART" id="SM00326">
    <property type="entry name" value="SH3"/>
    <property type="match status" value="1"/>
</dbReference>
<dbReference type="SMART" id="SM00219">
    <property type="entry name" value="TyrKc"/>
    <property type="match status" value="1"/>
</dbReference>
<dbReference type="SUPFAM" id="SSF56112">
    <property type="entry name" value="Protein kinase-like (PK-like)"/>
    <property type="match status" value="1"/>
</dbReference>
<dbReference type="SUPFAM" id="SSF55550">
    <property type="entry name" value="SH2 domain"/>
    <property type="match status" value="1"/>
</dbReference>
<dbReference type="SUPFAM" id="SSF50044">
    <property type="entry name" value="SH3-domain"/>
    <property type="match status" value="1"/>
</dbReference>
<dbReference type="PROSITE" id="PS00107">
    <property type="entry name" value="PROTEIN_KINASE_ATP"/>
    <property type="match status" value="1"/>
</dbReference>
<dbReference type="PROSITE" id="PS50011">
    <property type="entry name" value="PROTEIN_KINASE_DOM"/>
    <property type="match status" value="1"/>
</dbReference>
<dbReference type="PROSITE" id="PS00109">
    <property type="entry name" value="PROTEIN_KINASE_TYR"/>
    <property type="match status" value="1"/>
</dbReference>
<dbReference type="PROSITE" id="PS50001">
    <property type="entry name" value="SH2"/>
    <property type="match status" value="1"/>
</dbReference>
<dbReference type="PROSITE" id="PS50002">
    <property type="entry name" value="SH3"/>
    <property type="match status" value="1"/>
</dbReference>
<accession>P14234</accession>
<accession>Q61404</accession>
<accession>Q8BGM0</accession>
<name>FGR_MOUSE</name>
<protein>
    <recommendedName>
        <fullName>Tyrosine-protein kinase Fgr</fullName>
        <ecNumber>2.7.10.2</ecNumber>
    </recommendedName>
    <alternativeName>
        <fullName>Proto-oncogene c-Fgr</fullName>
    </alternativeName>
    <alternativeName>
        <fullName>p55-Fgr</fullName>
    </alternativeName>
</protein>